<accession>Q7J1C1</accession>
<comment type="function">
    <text evidence="1">This b-type cytochrome is tightly associated with the reaction center of photosystem II (PSII). PSII is a light-driven water:plastoquinone oxidoreductase that uses light energy to abstract electrons from H(2)O, generating O(2) and a proton gradient subsequently used for ATP formation. It consists of a core antenna complex that captures photons, and an electron transfer chain that converts photonic excitation into a charge separation.</text>
</comment>
<comment type="cofactor">
    <cofactor evidence="1">
        <name>heme b</name>
        <dbReference type="ChEBI" id="CHEBI:60344"/>
    </cofactor>
    <text evidence="1">With its partner (PsbE) binds heme. PSII binds additional chlorophylls, carotenoids and specific lipids.</text>
</comment>
<comment type="subunit">
    <text evidence="1">Heterodimer of an alpha subunit and a beta subunit. PSII is composed of 1 copy each of membrane proteins PsbA, PsbB, PsbC, PsbD, PsbE, PsbF, PsbH, PsbI, PsbJ, PsbK, PsbL, PsbM, PsbT, PsbX, PsbY, PsbZ, Psb30/Ycf12, at least 3 peripheral proteins of the oxygen-evolving complex and a large number of cofactors. It forms dimeric complexes.</text>
</comment>
<comment type="subcellular location">
    <subcellularLocation>
        <location evidence="1">Plastid</location>
        <location evidence="1">Chloroplast thylakoid membrane</location>
        <topology evidence="1">Single-pass membrane protein</topology>
    </subcellularLocation>
</comment>
<comment type="similarity">
    <text evidence="1">Belongs to the PsbE/PsbF family.</text>
</comment>
<proteinExistence type="inferred from homology"/>
<organism>
    <name type="scientific">Cabomba caroliniana</name>
    <name type="common">Carolina fanwort</name>
    <dbReference type="NCBI Taxonomy" id="4426"/>
    <lineage>
        <taxon>Eukaryota</taxon>
        <taxon>Viridiplantae</taxon>
        <taxon>Streptophyta</taxon>
        <taxon>Embryophyta</taxon>
        <taxon>Tracheophyta</taxon>
        <taxon>Spermatophyta</taxon>
        <taxon>Magnoliopsida</taxon>
        <taxon>Nymphaeales</taxon>
        <taxon>Cabombaceae</taxon>
        <taxon>Cabomba</taxon>
    </lineage>
</organism>
<reference key="1">
    <citation type="journal article" date="2000" name="Am. J. Bot.">
        <title>Utility of 17 chloroplast genes for inferring the phylogeny of the basal angiosperms.</title>
        <authorList>
            <person name="Graham S.W."/>
            <person name="Olmstead R.G."/>
        </authorList>
    </citation>
    <scope>NUCLEOTIDE SEQUENCE [GENOMIC DNA]</scope>
</reference>
<geneLocation type="chloroplast"/>
<name>PSBF_CABCA</name>
<feature type="chain" id="PRO_0000200363" description="Cytochrome b559 subunit beta">
    <location>
        <begin position="1"/>
        <end position="39"/>
    </location>
</feature>
<feature type="transmembrane region" description="Helical" evidence="1">
    <location>
        <begin position="14"/>
        <end position="30"/>
    </location>
</feature>
<feature type="binding site" description="axial binding residue" evidence="1">
    <location>
        <position position="18"/>
    </location>
    <ligand>
        <name>heme</name>
        <dbReference type="ChEBI" id="CHEBI:30413"/>
        <note>ligand shared with alpha subunit</note>
    </ligand>
    <ligandPart>
        <name>Fe</name>
        <dbReference type="ChEBI" id="CHEBI:18248"/>
    </ligandPart>
</feature>
<dbReference type="EMBL" id="AF123830">
    <property type="protein sequence ID" value="AAG26199.1"/>
    <property type="molecule type" value="Genomic_DNA"/>
</dbReference>
<dbReference type="RefSeq" id="YP_009310534.1">
    <property type="nucleotide sequence ID" value="NC_031505.1"/>
</dbReference>
<dbReference type="SMR" id="Q7J1C1"/>
<dbReference type="GeneID" id="29991297"/>
<dbReference type="GO" id="GO:0009535">
    <property type="term" value="C:chloroplast thylakoid membrane"/>
    <property type="evidence" value="ECO:0007669"/>
    <property type="project" value="UniProtKB-SubCell"/>
</dbReference>
<dbReference type="GO" id="GO:0009539">
    <property type="term" value="C:photosystem II reaction center"/>
    <property type="evidence" value="ECO:0007669"/>
    <property type="project" value="InterPro"/>
</dbReference>
<dbReference type="GO" id="GO:0009055">
    <property type="term" value="F:electron transfer activity"/>
    <property type="evidence" value="ECO:0007669"/>
    <property type="project" value="UniProtKB-UniRule"/>
</dbReference>
<dbReference type="GO" id="GO:0020037">
    <property type="term" value="F:heme binding"/>
    <property type="evidence" value="ECO:0007669"/>
    <property type="project" value="InterPro"/>
</dbReference>
<dbReference type="GO" id="GO:0005506">
    <property type="term" value="F:iron ion binding"/>
    <property type="evidence" value="ECO:0007669"/>
    <property type="project" value="UniProtKB-UniRule"/>
</dbReference>
<dbReference type="GO" id="GO:0009767">
    <property type="term" value="P:photosynthetic electron transport chain"/>
    <property type="evidence" value="ECO:0007669"/>
    <property type="project" value="InterPro"/>
</dbReference>
<dbReference type="HAMAP" id="MF_00643">
    <property type="entry name" value="PSII_PsbF"/>
    <property type="match status" value="1"/>
</dbReference>
<dbReference type="InterPro" id="IPR006241">
    <property type="entry name" value="PSII_cyt_b559_bsu"/>
</dbReference>
<dbReference type="InterPro" id="IPR006216">
    <property type="entry name" value="PSII_cyt_b559_CS"/>
</dbReference>
<dbReference type="InterPro" id="IPR013081">
    <property type="entry name" value="PSII_cyt_b559_N"/>
</dbReference>
<dbReference type="NCBIfam" id="TIGR01333">
    <property type="entry name" value="cyt_b559_beta"/>
    <property type="match status" value="1"/>
</dbReference>
<dbReference type="Pfam" id="PF00283">
    <property type="entry name" value="Cytochrom_B559"/>
    <property type="match status" value="1"/>
</dbReference>
<dbReference type="PIRSF" id="PIRSF000037">
    <property type="entry name" value="PsbF"/>
    <property type="match status" value="1"/>
</dbReference>
<dbReference type="SUPFAM" id="SSF161045">
    <property type="entry name" value="Cytochrome b559 subunits"/>
    <property type="match status" value="1"/>
</dbReference>
<dbReference type="PROSITE" id="PS00537">
    <property type="entry name" value="CYTOCHROME_B559"/>
    <property type="match status" value="1"/>
</dbReference>
<keyword id="KW-0150">Chloroplast</keyword>
<keyword id="KW-0249">Electron transport</keyword>
<keyword id="KW-0349">Heme</keyword>
<keyword id="KW-0408">Iron</keyword>
<keyword id="KW-0472">Membrane</keyword>
<keyword id="KW-0479">Metal-binding</keyword>
<keyword id="KW-0602">Photosynthesis</keyword>
<keyword id="KW-0604">Photosystem II</keyword>
<keyword id="KW-0934">Plastid</keyword>
<keyword id="KW-0793">Thylakoid</keyword>
<keyword id="KW-0812">Transmembrane</keyword>
<keyword id="KW-1133">Transmembrane helix</keyword>
<keyword id="KW-0813">Transport</keyword>
<gene>
    <name evidence="1" type="primary">psbF</name>
</gene>
<sequence length="39" mass="4424">MTIDRTYPIFTVRWLAVHGLAVPTVSFLGSISAMQFIQR</sequence>
<evidence type="ECO:0000255" key="1">
    <source>
        <dbReference type="HAMAP-Rule" id="MF_00643"/>
    </source>
</evidence>
<protein>
    <recommendedName>
        <fullName evidence="1">Cytochrome b559 subunit beta</fullName>
    </recommendedName>
    <alternativeName>
        <fullName evidence="1">PSII reaction center subunit VI</fullName>
    </alternativeName>
</protein>